<sequence>AGAAELQPELAVAEHVRYESTGPALCTVVFLLVYFFGMASSIWWVILSLTWFLAAGMKWGNEAIAGYAQYFHLAAWLLPSVKSIAVLALSSVDGDPVAGICYVGNQSLENLRGFVLAPLVVYLFTGSLFLLAGFVSLFRIRSVIKQGGTKTDKLEKLMIRIGIFTVLYTVPATIVIACYIYEQHNREAWEQAQNCSCPGDPHRPKPDYAVFMLKYFM</sequence>
<name>FZD8_CHICK</name>
<dbReference type="EMBL" id="AF224318">
    <property type="protein sequence ID" value="AAF61098.1"/>
    <property type="molecule type" value="mRNA"/>
</dbReference>
<dbReference type="EMBL" id="AB029453">
    <property type="protein sequence ID" value="BAA89403.1"/>
    <property type="molecule type" value="mRNA"/>
</dbReference>
<dbReference type="SMR" id="Q9IA03"/>
<dbReference type="GlyCosmos" id="Q9IA03">
    <property type="glycosylation" value="2 sites, No reported glycans"/>
</dbReference>
<dbReference type="GlyGen" id="Q9IA03">
    <property type="glycosylation" value="2 sites"/>
</dbReference>
<dbReference type="VEuPathDB" id="HostDB:geneid_395571"/>
<dbReference type="InParanoid" id="Q9IA03"/>
<dbReference type="OrthoDB" id="10053709at2759"/>
<dbReference type="PhylomeDB" id="Q9IA03"/>
<dbReference type="Proteomes" id="UP000000539">
    <property type="component" value="Unassembled WGS sequence"/>
</dbReference>
<dbReference type="GO" id="GO:0005886">
    <property type="term" value="C:plasma membrane"/>
    <property type="evidence" value="ECO:0007669"/>
    <property type="project" value="UniProtKB-SubCell"/>
</dbReference>
<dbReference type="GO" id="GO:0004930">
    <property type="term" value="F:G protein-coupled receptor activity"/>
    <property type="evidence" value="ECO:0007669"/>
    <property type="project" value="UniProtKB-KW"/>
</dbReference>
<dbReference type="GO" id="GO:0048731">
    <property type="term" value="P:system development"/>
    <property type="evidence" value="ECO:0007669"/>
    <property type="project" value="UniProtKB-ARBA"/>
</dbReference>
<dbReference type="GO" id="GO:0016055">
    <property type="term" value="P:Wnt signaling pathway"/>
    <property type="evidence" value="ECO:0007669"/>
    <property type="project" value="UniProtKB-KW"/>
</dbReference>
<dbReference type="FunFam" id="1.20.1070.10:FF:000798">
    <property type="entry name" value="Zg06"/>
    <property type="match status" value="1"/>
</dbReference>
<dbReference type="Gene3D" id="1.20.1070.10">
    <property type="entry name" value="Rhodopsin 7-helix transmembrane proteins"/>
    <property type="match status" value="1"/>
</dbReference>
<dbReference type="InterPro" id="IPR015526">
    <property type="entry name" value="Frizzled/SFRP"/>
</dbReference>
<dbReference type="InterPro" id="IPR000539">
    <property type="entry name" value="Frizzled/Smoothened_7TM"/>
</dbReference>
<dbReference type="InterPro" id="IPR017981">
    <property type="entry name" value="GPCR_2-like_7TM"/>
</dbReference>
<dbReference type="PANTHER" id="PTHR11309">
    <property type="entry name" value="FRIZZLED"/>
    <property type="match status" value="1"/>
</dbReference>
<dbReference type="PANTHER" id="PTHR11309:SF136">
    <property type="entry name" value="FRIZZLED-5"/>
    <property type="match status" value="1"/>
</dbReference>
<dbReference type="Pfam" id="PF01534">
    <property type="entry name" value="Frizzled"/>
    <property type="match status" value="1"/>
</dbReference>
<dbReference type="PRINTS" id="PR00489">
    <property type="entry name" value="FRIZZLED"/>
</dbReference>
<dbReference type="SMART" id="SM01330">
    <property type="entry name" value="Frizzled"/>
    <property type="match status" value="1"/>
</dbReference>
<dbReference type="SUPFAM" id="SSF81321">
    <property type="entry name" value="Family A G protein-coupled receptor-like"/>
    <property type="match status" value="1"/>
</dbReference>
<dbReference type="PROSITE" id="PS50261">
    <property type="entry name" value="G_PROTEIN_RECEP_F2_4"/>
    <property type="match status" value="1"/>
</dbReference>
<evidence type="ECO:0000250" key="1"/>
<evidence type="ECO:0000255" key="2"/>
<evidence type="ECO:0000305" key="3"/>
<reference key="1">
    <citation type="journal article" date="2000" name="Mech. Dev.">
        <title>Characterization of avian frizzled genes in cranial placode development.</title>
        <authorList>
            <person name="Stark M.R."/>
            <person name="Biggs J.J."/>
            <person name="Schoenwolf G.C."/>
            <person name="Rao M.S."/>
        </authorList>
    </citation>
    <scope>NUCLEOTIDE SEQUENCE [MRNA] OF 1-157</scope>
    <source>
        <tissue>Embryo</tissue>
    </source>
</reference>
<reference key="2">
    <citation type="journal article" date="1999" name="Cell. Mol. Biol.">
        <title>Differential expression of the frizzled family involved in Wnt signaling during chick limb development.</title>
        <authorList>
            <person name="Nohno T."/>
            <person name="Kawakami Y."/>
            <person name="Wada N."/>
            <person name="Komaguchi C."/>
            <person name="Nishimatsu S."/>
        </authorList>
    </citation>
    <scope>NUCLEOTIDE SEQUENCE [MRNA] OF 100-217</scope>
    <source>
        <tissue>Limb bud</tissue>
    </source>
</reference>
<organism>
    <name type="scientific">Gallus gallus</name>
    <name type="common">Chicken</name>
    <dbReference type="NCBI Taxonomy" id="9031"/>
    <lineage>
        <taxon>Eukaryota</taxon>
        <taxon>Metazoa</taxon>
        <taxon>Chordata</taxon>
        <taxon>Craniata</taxon>
        <taxon>Vertebrata</taxon>
        <taxon>Euteleostomi</taxon>
        <taxon>Archelosauria</taxon>
        <taxon>Archosauria</taxon>
        <taxon>Dinosauria</taxon>
        <taxon>Saurischia</taxon>
        <taxon>Theropoda</taxon>
        <taxon>Coelurosauria</taxon>
        <taxon>Aves</taxon>
        <taxon>Neognathae</taxon>
        <taxon>Galloanserae</taxon>
        <taxon>Galliformes</taxon>
        <taxon>Phasianidae</taxon>
        <taxon>Phasianinae</taxon>
        <taxon>Gallus</taxon>
    </lineage>
</organism>
<feature type="chain" id="PRO_0000205978" description="Frizzled-8">
    <location>
        <begin position="1" status="less than"/>
        <end position="217" status="greater than"/>
    </location>
</feature>
<feature type="topological domain" description="Extracellular" evidence="2">
    <location>
        <begin position="1" status="less than"/>
        <end position="26"/>
    </location>
</feature>
<feature type="transmembrane region" description="Helical; Name=3" evidence="2">
    <location>
        <begin position="27"/>
        <end position="47"/>
    </location>
</feature>
<feature type="topological domain" description="Cytoplasmic" evidence="2">
    <location>
        <begin position="48"/>
        <end position="69"/>
    </location>
</feature>
<feature type="transmembrane region" description="Helical; Name=4" evidence="2">
    <location>
        <begin position="70"/>
        <end position="90"/>
    </location>
</feature>
<feature type="topological domain" description="Extracellular" evidence="2">
    <location>
        <begin position="91"/>
        <end position="113"/>
    </location>
</feature>
<feature type="transmembrane region" description="Helical; Name=5" evidence="2">
    <location>
        <begin position="114"/>
        <end position="134"/>
    </location>
</feature>
<feature type="topological domain" description="Cytoplasmic" evidence="2">
    <location>
        <begin position="135"/>
        <end position="160"/>
    </location>
</feature>
<feature type="transmembrane region" description="Helical; Name=6" evidence="2">
    <location>
        <begin position="161"/>
        <end position="181"/>
    </location>
</feature>
<feature type="topological domain" description="Extracellular" evidence="2">
    <location>
        <begin position="182"/>
        <end position="209"/>
    </location>
</feature>
<feature type="transmembrane region" description="Helical; Name=7" evidence="2">
    <location>
        <begin position="210"/>
        <end position="217" status="greater than"/>
    </location>
</feature>
<feature type="glycosylation site" description="N-linked (GlcNAc...) asparagine" evidence="2">
    <location>
        <position position="105"/>
    </location>
</feature>
<feature type="glycosylation site" description="N-linked (GlcNAc...) asparagine" evidence="2">
    <location>
        <position position="194"/>
    </location>
</feature>
<feature type="sequence conflict" description="In Ref. 1; AAF61098." evidence="3" ref="1">
    <original>VV</original>
    <variation>LI</variation>
    <location>
        <begin position="120"/>
        <end position="121"/>
    </location>
</feature>
<feature type="sequence conflict" description="In Ref. 1; AAF61098." evidence="3" ref="1">
    <original>FT</original>
    <variation>AI</variation>
    <location>
        <begin position="124"/>
        <end position="125"/>
    </location>
</feature>
<feature type="sequence conflict" description="In Ref. 1." evidence="3" ref="1">
    <original>FLLAGFVSLFRIRSVIKQGGTKTDKLEKL</original>
    <variation>YSDVSTGLTWRSGTASSVSYPKQMPLSQV</variation>
    <location>
        <begin position="129"/>
        <end position="157"/>
    </location>
</feature>
<feature type="non-terminal residue">
    <location>
        <position position="1"/>
    </location>
</feature>
<feature type="non-terminal residue">
    <location>
        <position position="217"/>
    </location>
</feature>
<proteinExistence type="evidence at transcript level"/>
<comment type="function">
    <text>Receptor for Wnt proteins. Most of frizzled receptors are coupled to the beta-catenin canonical signaling pathway, which leads to the activation of disheveled proteins, inhibition of GSK-3 kinase, nuclear accumulation of beta-catenin and activation of Wnt target genes. A second signaling pathway involving PKC and calcium fluxes has been seen for some family members, but it is not yet clear if it represents a distinct pathway or if it can be integrated in the canonical pathway, as PKC seems to be required for Wnt-mediated inactivation of GSK-3 kinase. Both pathways seem to involve interactions with G-proteins. May be involved in transduction and intercellular transmission of polarity information during tissue morphogenesis and/or in differentiated tissues.</text>
</comment>
<comment type="subcellular location">
    <subcellularLocation>
        <location>Membrane</location>
        <topology>Multi-pass membrane protein</topology>
    </subcellularLocation>
    <subcellularLocation>
        <location evidence="1">Cell membrane</location>
        <topology evidence="1">Multi-pass membrane protein</topology>
    </subcellularLocation>
</comment>
<comment type="developmental stage">
    <text>Expressed in prechordal plate between stages 3 and 15.</text>
</comment>
<comment type="domain">
    <text evidence="1">The FZ domain is involved in binding with Wnt ligands.</text>
</comment>
<comment type="similarity">
    <text evidence="3">Belongs to the G-protein coupled receptor Fz/Smo family.</text>
</comment>
<gene>
    <name type="primary">FZD8</name>
    <name type="synonym">FZ8</name>
</gene>
<keyword id="KW-1003">Cell membrane</keyword>
<keyword id="KW-0217">Developmental protein</keyword>
<keyword id="KW-0297">G-protein coupled receptor</keyword>
<keyword id="KW-0325">Glycoprotein</keyword>
<keyword id="KW-0472">Membrane</keyword>
<keyword id="KW-0675">Receptor</keyword>
<keyword id="KW-1185">Reference proteome</keyword>
<keyword id="KW-0807">Transducer</keyword>
<keyword id="KW-0812">Transmembrane</keyword>
<keyword id="KW-1133">Transmembrane helix</keyword>
<keyword id="KW-0879">Wnt signaling pathway</keyword>
<accession>Q9IA03</accession>
<accession>Q9PTW0</accession>
<protein>
    <recommendedName>
        <fullName>Frizzled-8</fullName>
        <shortName>Fz-8</shortName>
        <shortName>cFz-8</shortName>
    </recommendedName>
</protein>